<comment type="function">
    <text>May be involved in transcriptional regulation.</text>
</comment>
<comment type="interaction">
    <interactant intactId="EBI-12006434">
        <id>Q96MX3</id>
    </interactant>
    <interactant intactId="EBI-1044593">
        <id>Q9NRW3</id>
        <label>APOBEC3C</label>
    </interactant>
    <organismsDiffer>false</organismsDiffer>
    <experiments>4</experiments>
</comment>
<comment type="interaction">
    <interactant intactId="EBI-12006434">
        <id>Q96MX3</id>
    </interactant>
    <interactant intactId="EBI-358049">
        <id>Q13895</id>
        <label>BYSL</label>
    </interactant>
    <organismsDiffer>false</organismsDiffer>
    <experiments>3</experiments>
</comment>
<comment type="interaction">
    <interactant intactId="EBI-12006434">
        <id>Q96MX3</id>
    </interactant>
    <interactant intactId="EBI-747776">
        <id>Q53EZ4</id>
        <label>CEP55</label>
    </interactant>
    <organismsDiffer>false</organismsDiffer>
    <experiments>3</experiments>
</comment>
<comment type="interaction">
    <interactant intactId="EBI-12006434">
        <id>Q96MX3</id>
    </interactant>
    <interactant intactId="EBI-347740">
        <id>P60228</id>
        <label>EIF3E</label>
    </interactant>
    <organismsDiffer>false</organismsDiffer>
    <experiments>3</experiments>
</comment>
<comment type="interaction">
    <interactant intactId="EBI-12006434">
        <id>Q96MX3</id>
    </interactant>
    <interactant intactId="EBI-744935">
        <id>Q9BVV2</id>
        <label>FNDC11</label>
    </interactant>
    <organismsDiffer>false</organismsDiffer>
    <experiments>3</experiments>
</comment>
<comment type="interaction">
    <interactant intactId="EBI-12006434">
        <id>Q96MX3</id>
    </interactant>
    <interactant intactId="EBI-618309">
        <id>Q08379</id>
        <label>GOLGA2</label>
    </interactant>
    <organismsDiffer>false</organismsDiffer>
    <experiments>3</experiments>
</comment>
<comment type="interaction">
    <interactant intactId="EBI-12006434">
        <id>Q96MX3</id>
    </interactant>
    <interactant intactId="EBI-5916454">
        <id>A6NEM1</id>
        <label>GOLGA6L9</label>
    </interactant>
    <organismsDiffer>false</organismsDiffer>
    <experiments>3</experiments>
</comment>
<comment type="interaction">
    <interactant intactId="EBI-12006434">
        <id>Q96MX3</id>
    </interactant>
    <interactant intactId="EBI-10961706">
        <id>Q96ED9-2</id>
        <label>HOOK2</label>
    </interactant>
    <organismsDiffer>false</organismsDiffer>
    <experiments>3</experiments>
</comment>
<comment type="interaction">
    <interactant intactId="EBI-12006434">
        <id>Q96MX3</id>
    </interactant>
    <interactant intactId="EBI-399257">
        <id>Q15014</id>
        <label>MORF4L2</label>
    </interactant>
    <organismsDiffer>false</organismsDiffer>
    <experiments>3</experiments>
</comment>
<comment type="interaction">
    <interactant intactId="EBI-12006434">
        <id>Q96MX3</id>
    </interactant>
    <interactant intactId="EBI-11522433">
        <id>Q5JR59-3</id>
        <label>MTUS2</label>
    </interactant>
    <organismsDiffer>false</organismsDiffer>
    <experiments>3</experiments>
</comment>
<comment type="interaction">
    <interactant intactId="EBI-12006434">
        <id>Q96MX3</id>
    </interactant>
    <interactant intactId="EBI-1051317">
        <id>Q9H4L5</id>
        <label>OSBPL3</label>
    </interactant>
    <organismsDiffer>false</organismsDiffer>
    <experiments>3</experiments>
</comment>
<comment type="interaction">
    <interactant intactId="EBI-12006434">
        <id>Q96MX3</id>
    </interactant>
    <interactant intactId="EBI-1567797">
        <id>Q8WWY3</id>
        <label>PRPF31</label>
    </interactant>
    <organismsDiffer>false</organismsDiffer>
    <experiments>3</experiments>
</comment>
<comment type="interaction">
    <interactant intactId="EBI-12006434">
        <id>Q96MX3</id>
    </interactant>
    <interactant intactId="EBI-348469">
        <id>Q15427</id>
        <label>SF3B4</label>
    </interactant>
    <organismsDiffer>false</organismsDiffer>
    <experiments>3</experiments>
</comment>
<comment type="interaction">
    <interactant intactId="EBI-12006434">
        <id>Q96MX3</id>
    </interactant>
    <interactant intactId="EBI-12007872">
        <id>O75410-7</id>
        <label>TACC1</label>
    </interactant>
    <organismsDiffer>false</organismsDiffer>
    <experiments>3</experiments>
</comment>
<comment type="interaction">
    <interactant intactId="EBI-12006434">
        <id>Q96MX3</id>
    </interactant>
    <interactant intactId="EBI-11741437">
        <id>Q08117-2</id>
        <label>TLE5</label>
    </interactant>
    <organismsDiffer>false</organismsDiffer>
    <experiments>3</experiments>
</comment>
<comment type="interaction">
    <interactant intactId="EBI-12006434">
        <id>Q96MX3</id>
    </interactant>
    <interactant intactId="EBI-725997">
        <id>Q8WV44</id>
        <label>TRIM41</label>
    </interactant>
    <organismsDiffer>false</organismsDiffer>
    <experiments>3</experiments>
</comment>
<comment type="interaction">
    <interactant intactId="EBI-12006434">
        <id>Q96MX3</id>
    </interactant>
    <interactant intactId="EBI-12006434">
        <id>Q96MX3</id>
        <label>ZNF48</label>
    </interactant>
    <organismsDiffer>false</organismsDiffer>
    <experiments>3</experiments>
</comment>
<comment type="interaction">
    <interactant intactId="EBI-12006434">
        <id>Q96MX3</id>
    </interactant>
    <interactant intactId="EBI-10251462">
        <id>Q6NX45</id>
        <label>ZNF774</label>
    </interactant>
    <organismsDiffer>false</organismsDiffer>
    <experiments>3</experiments>
</comment>
<comment type="interaction">
    <interactant intactId="EBI-12006434">
        <id>Q96MX3</id>
    </interactant>
    <interactant intactId="EBI-10240849">
        <id>Q3KQV3</id>
        <label>ZNF792</label>
    </interactant>
    <organismsDiffer>false</organismsDiffer>
    <experiments>3</experiments>
</comment>
<comment type="subcellular location">
    <subcellularLocation>
        <location evidence="7">Nucleus</location>
    </subcellularLocation>
</comment>
<comment type="similarity">
    <text evidence="7">Belongs to the krueppel C2H2-type zinc-finger protein family.</text>
</comment>
<comment type="sequence caution" evidence="7">
    <conflict type="frameshift">
        <sequence resource="EMBL-CDS" id="AAA61316"/>
    </conflict>
</comment>
<gene>
    <name type="primary">ZNF48</name>
    <name type="synonym">ZNF553</name>
</gene>
<feature type="chain" id="PRO_0000234586" description="Zinc finger protein 48">
    <location>
        <begin position="1"/>
        <end position="618"/>
    </location>
</feature>
<feature type="zinc finger region" description="C2H2-type 1" evidence="2">
    <location>
        <begin position="112"/>
        <end position="134"/>
    </location>
</feature>
<feature type="zinc finger region" description="C2H2-type 2" evidence="2">
    <location>
        <begin position="140"/>
        <end position="162"/>
    </location>
</feature>
<feature type="zinc finger region" description="C2H2-type 3" evidence="2">
    <location>
        <begin position="192"/>
        <end position="214"/>
    </location>
</feature>
<feature type="zinc finger region" description="C2H2-type 4" evidence="2">
    <location>
        <begin position="220"/>
        <end position="242"/>
    </location>
</feature>
<feature type="zinc finger region" description="C2H2-type 5" evidence="2">
    <location>
        <begin position="275"/>
        <end position="297"/>
    </location>
</feature>
<feature type="zinc finger region" description="C2H2-type 6" evidence="2">
    <location>
        <begin position="303"/>
        <end position="325"/>
    </location>
</feature>
<feature type="zinc finger region" description="C2H2-type 7" evidence="2">
    <location>
        <begin position="331"/>
        <end position="353"/>
    </location>
</feature>
<feature type="zinc finger region" description="C2H2-type 8" evidence="2">
    <location>
        <begin position="359"/>
        <end position="381"/>
    </location>
</feature>
<feature type="zinc finger region" description="C2H2-type 9" evidence="2">
    <location>
        <begin position="451"/>
        <end position="473"/>
    </location>
</feature>
<feature type="zinc finger region" description="C2H2-type 10" evidence="2">
    <location>
        <begin position="479"/>
        <end position="501"/>
    </location>
</feature>
<feature type="zinc finger region" description="C2H2-type 11" evidence="2">
    <location>
        <begin position="543"/>
        <end position="565"/>
    </location>
</feature>
<feature type="zinc finger region" description="C2H2-type 12" evidence="2">
    <location>
        <begin position="571"/>
        <end position="593"/>
    </location>
</feature>
<feature type="region of interest" description="Disordered" evidence="3">
    <location>
        <begin position="1"/>
        <end position="51"/>
    </location>
</feature>
<feature type="region of interest" description="Disordered" evidence="3">
    <location>
        <begin position="78"/>
        <end position="109"/>
    </location>
</feature>
<feature type="region of interest" description="Disordered" evidence="3">
    <location>
        <begin position="157"/>
        <end position="189"/>
    </location>
</feature>
<feature type="region of interest" description="Disordered" evidence="3">
    <location>
        <begin position="235"/>
        <end position="271"/>
    </location>
</feature>
<feature type="region of interest" description="Disordered" evidence="3">
    <location>
        <begin position="392"/>
        <end position="457"/>
    </location>
</feature>
<feature type="region of interest" description="Disordered" evidence="3">
    <location>
        <begin position="500"/>
        <end position="540"/>
    </location>
</feature>
<feature type="compositionally biased region" description="Basic and acidic residues" evidence="3">
    <location>
        <begin position="1"/>
        <end position="22"/>
    </location>
</feature>
<feature type="compositionally biased region" description="Basic and acidic residues" evidence="3">
    <location>
        <begin position="39"/>
        <end position="51"/>
    </location>
</feature>
<feature type="compositionally biased region" description="Pro residues" evidence="3">
    <location>
        <begin position="392"/>
        <end position="414"/>
    </location>
</feature>
<feature type="compositionally biased region" description="Low complexity" evidence="3">
    <location>
        <begin position="415"/>
        <end position="432"/>
    </location>
</feature>
<feature type="compositionally biased region" description="Pro residues" evidence="3">
    <location>
        <begin position="508"/>
        <end position="528"/>
    </location>
</feature>
<feature type="modified residue" description="N-acetylmethionine" evidence="1">
    <location>
        <position position="1"/>
    </location>
</feature>
<feature type="cross-link" description="Glycyl lysine isopeptide (Lys-Gly) (interchain with G-Cter in SUMO2)" evidence="11">
    <location>
        <position position="87"/>
    </location>
</feature>
<feature type="cross-link" description="Glycyl lysine isopeptide (Lys-Gly) (interchain with G-Cter in SUMO2)" evidence="11">
    <location>
        <position position="179"/>
    </location>
</feature>
<feature type="cross-link" description="Glycyl lysine isopeptide (Lys-Gly) (interchain with G-Cter in SUMO2)" evidence="11">
    <location>
        <position position="269"/>
    </location>
</feature>
<feature type="cross-link" description="Glycyl lysine isopeptide (Lys-Gly) (interchain with G-Cter in SUMO2)" evidence="11">
    <location>
        <position position="329"/>
    </location>
</feature>
<feature type="cross-link" description="Glycyl lysine isopeptide (Lys-Gly) (interchain with G-Cter in SUMO2)" evidence="11">
    <location>
        <position position="477"/>
    </location>
</feature>
<feature type="cross-link" description="Glycyl lysine isopeptide (Lys-Gly) (interchain with G-Cter in SUMO2)" evidence="8 9 10 11">
    <location>
        <position position="610"/>
    </location>
</feature>
<feature type="sequence variant" id="VAR_059894" description="In dbSNP:rs7200143.">
    <original>Q</original>
    <variation>R</variation>
    <location>
        <position position="21"/>
    </location>
</feature>
<feature type="sequence variant" id="VAR_052758" description="In dbSNP:rs12921440." evidence="4 5 6">
    <original>A</original>
    <variation>V</variation>
    <location>
        <position position="65"/>
    </location>
</feature>
<feature type="sequence variant" id="VAR_052759" description="In dbSNP:rs34843513.">
    <original>I</original>
    <variation>V</variation>
    <location>
        <position position="224"/>
    </location>
</feature>
<feature type="sequence conflict" description="In Ref. 2; AAH41388." evidence="7" ref="2">
    <original>L</original>
    <variation>I</variation>
    <location>
        <position position="12"/>
    </location>
</feature>
<feature type="sequence conflict" description="In Ref. 2; AAH41388." evidence="7" ref="2">
    <original>Y</original>
    <variation>C</variation>
    <location>
        <position position="140"/>
    </location>
</feature>
<feature type="sequence conflict" description="In Ref. 1; BAB71146." evidence="7" ref="1">
    <original>Q</original>
    <variation>L</variation>
    <location>
        <position position="203"/>
    </location>
</feature>
<feature type="sequence conflict" description="In Ref. 2; AAH41388." evidence="7" ref="2">
    <original>S</original>
    <variation>P</variation>
    <location>
        <position position="344"/>
    </location>
</feature>
<feature type="sequence conflict" description="In Ref. 2; AAH41388." evidence="7" ref="2">
    <original>R</original>
    <variation>H</variation>
    <location>
        <position position="351"/>
    </location>
</feature>
<feature type="sequence conflict" description="In Ref. 2; AAH41388." evidence="7" ref="2">
    <original>H</original>
    <variation>R</variation>
    <location>
        <position position="451"/>
    </location>
</feature>
<feature type="sequence conflict" description="In Ref. 2; AAH41388." evidence="7" ref="2">
    <original>R</original>
    <variation>H</variation>
    <location>
        <position position="563"/>
    </location>
</feature>
<proteinExistence type="evidence at protein level"/>
<protein>
    <recommendedName>
        <fullName>Zinc finger protein 48</fullName>
    </recommendedName>
    <alternativeName>
        <fullName>Zinc finger protein 553</fullName>
    </alternativeName>
</protein>
<organism>
    <name type="scientific">Homo sapiens</name>
    <name type="common">Human</name>
    <dbReference type="NCBI Taxonomy" id="9606"/>
    <lineage>
        <taxon>Eukaryota</taxon>
        <taxon>Metazoa</taxon>
        <taxon>Chordata</taxon>
        <taxon>Craniata</taxon>
        <taxon>Vertebrata</taxon>
        <taxon>Euteleostomi</taxon>
        <taxon>Mammalia</taxon>
        <taxon>Eutheria</taxon>
        <taxon>Euarchontoglires</taxon>
        <taxon>Primates</taxon>
        <taxon>Haplorrhini</taxon>
        <taxon>Catarrhini</taxon>
        <taxon>Hominidae</taxon>
        <taxon>Homo</taxon>
    </lineage>
</organism>
<reference key="1">
    <citation type="journal article" date="2004" name="Nat. Genet.">
        <title>Complete sequencing and characterization of 21,243 full-length human cDNAs.</title>
        <authorList>
            <person name="Ota T."/>
            <person name="Suzuki Y."/>
            <person name="Nishikawa T."/>
            <person name="Otsuki T."/>
            <person name="Sugiyama T."/>
            <person name="Irie R."/>
            <person name="Wakamatsu A."/>
            <person name="Hayashi K."/>
            <person name="Sato H."/>
            <person name="Nagai K."/>
            <person name="Kimura K."/>
            <person name="Makita H."/>
            <person name="Sekine M."/>
            <person name="Obayashi M."/>
            <person name="Nishi T."/>
            <person name="Shibahara T."/>
            <person name="Tanaka T."/>
            <person name="Ishii S."/>
            <person name="Yamamoto J."/>
            <person name="Saito K."/>
            <person name="Kawai Y."/>
            <person name="Isono Y."/>
            <person name="Nakamura Y."/>
            <person name="Nagahari K."/>
            <person name="Murakami K."/>
            <person name="Yasuda T."/>
            <person name="Iwayanagi T."/>
            <person name="Wagatsuma M."/>
            <person name="Shiratori A."/>
            <person name="Sudo H."/>
            <person name="Hosoiri T."/>
            <person name="Kaku Y."/>
            <person name="Kodaira H."/>
            <person name="Kondo H."/>
            <person name="Sugawara M."/>
            <person name="Takahashi M."/>
            <person name="Kanda K."/>
            <person name="Yokoi T."/>
            <person name="Furuya T."/>
            <person name="Kikkawa E."/>
            <person name="Omura Y."/>
            <person name="Abe K."/>
            <person name="Kamihara K."/>
            <person name="Katsuta N."/>
            <person name="Sato K."/>
            <person name="Tanikawa M."/>
            <person name="Yamazaki M."/>
            <person name="Ninomiya K."/>
            <person name="Ishibashi T."/>
            <person name="Yamashita H."/>
            <person name="Murakawa K."/>
            <person name="Fujimori K."/>
            <person name="Tanai H."/>
            <person name="Kimata M."/>
            <person name="Watanabe M."/>
            <person name="Hiraoka S."/>
            <person name="Chiba Y."/>
            <person name="Ishida S."/>
            <person name="Ono Y."/>
            <person name="Takiguchi S."/>
            <person name="Watanabe S."/>
            <person name="Yosida M."/>
            <person name="Hotuta T."/>
            <person name="Kusano J."/>
            <person name="Kanehori K."/>
            <person name="Takahashi-Fujii A."/>
            <person name="Hara H."/>
            <person name="Tanase T.-O."/>
            <person name="Nomura Y."/>
            <person name="Togiya S."/>
            <person name="Komai F."/>
            <person name="Hara R."/>
            <person name="Takeuchi K."/>
            <person name="Arita M."/>
            <person name="Imose N."/>
            <person name="Musashino K."/>
            <person name="Yuuki H."/>
            <person name="Oshima A."/>
            <person name="Sasaki N."/>
            <person name="Aotsuka S."/>
            <person name="Yoshikawa Y."/>
            <person name="Matsunawa H."/>
            <person name="Ichihara T."/>
            <person name="Shiohata N."/>
            <person name="Sano S."/>
            <person name="Moriya S."/>
            <person name="Momiyama H."/>
            <person name="Satoh N."/>
            <person name="Takami S."/>
            <person name="Terashima Y."/>
            <person name="Suzuki O."/>
            <person name="Nakagawa S."/>
            <person name="Senoh A."/>
            <person name="Mizoguchi H."/>
            <person name="Goto Y."/>
            <person name="Shimizu F."/>
            <person name="Wakebe H."/>
            <person name="Hishigaki H."/>
            <person name="Watanabe T."/>
            <person name="Sugiyama A."/>
            <person name="Takemoto M."/>
            <person name="Kawakami B."/>
            <person name="Yamazaki M."/>
            <person name="Watanabe K."/>
            <person name="Kumagai A."/>
            <person name="Itakura S."/>
            <person name="Fukuzumi Y."/>
            <person name="Fujimori Y."/>
            <person name="Komiyama M."/>
            <person name="Tashiro H."/>
            <person name="Tanigami A."/>
            <person name="Fujiwara T."/>
            <person name="Ono T."/>
            <person name="Yamada K."/>
            <person name="Fujii Y."/>
            <person name="Ozaki K."/>
            <person name="Hirao M."/>
            <person name="Ohmori Y."/>
            <person name="Kawabata A."/>
            <person name="Hikiji T."/>
            <person name="Kobatake N."/>
            <person name="Inagaki H."/>
            <person name="Ikema Y."/>
            <person name="Okamoto S."/>
            <person name="Okitani R."/>
            <person name="Kawakami T."/>
            <person name="Noguchi S."/>
            <person name="Itoh T."/>
            <person name="Shigeta K."/>
            <person name="Senba T."/>
            <person name="Matsumura K."/>
            <person name="Nakajima Y."/>
            <person name="Mizuno T."/>
            <person name="Morinaga M."/>
            <person name="Sasaki M."/>
            <person name="Togashi T."/>
            <person name="Oyama M."/>
            <person name="Hata H."/>
            <person name="Watanabe M."/>
            <person name="Komatsu T."/>
            <person name="Mizushima-Sugano J."/>
            <person name="Satoh T."/>
            <person name="Shirai Y."/>
            <person name="Takahashi Y."/>
            <person name="Nakagawa K."/>
            <person name="Okumura K."/>
            <person name="Nagase T."/>
            <person name="Nomura N."/>
            <person name="Kikuchi H."/>
            <person name="Masuho Y."/>
            <person name="Yamashita R."/>
            <person name="Nakai K."/>
            <person name="Yada T."/>
            <person name="Nakamura Y."/>
            <person name="Ohara O."/>
            <person name="Isogai T."/>
            <person name="Sugano S."/>
        </authorList>
    </citation>
    <scope>NUCLEOTIDE SEQUENCE [LARGE SCALE MRNA]</scope>
    <scope>VARIANT VAL-65</scope>
    <source>
        <tissue>Hippocampus</tissue>
    </source>
</reference>
<reference key="2">
    <citation type="journal article" date="2004" name="Nature">
        <title>The sequence and analysis of duplication-rich human chromosome 16.</title>
        <authorList>
            <person name="Martin J."/>
            <person name="Han C."/>
            <person name="Gordon L.A."/>
            <person name="Terry A."/>
            <person name="Prabhakar S."/>
            <person name="She X."/>
            <person name="Xie G."/>
            <person name="Hellsten U."/>
            <person name="Chan Y.M."/>
            <person name="Altherr M."/>
            <person name="Couronne O."/>
            <person name="Aerts A."/>
            <person name="Bajorek E."/>
            <person name="Black S."/>
            <person name="Blumer H."/>
            <person name="Branscomb E."/>
            <person name="Brown N.C."/>
            <person name="Bruno W.J."/>
            <person name="Buckingham J.M."/>
            <person name="Callen D.F."/>
            <person name="Campbell C.S."/>
            <person name="Campbell M.L."/>
            <person name="Campbell E.W."/>
            <person name="Caoile C."/>
            <person name="Challacombe J.F."/>
            <person name="Chasteen L.A."/>
            <person name="Chertkov O."/>
            <person name="Chi H.C."/>
            <person name="Christensen M."/>
            <person name="Clark L.M."/>
            <person name="Cohn J.D."/>
            <person name="Denys M."/>
            <person name="Detter J.C."/>
            <person name="Dickson M."/>
            <person name="Dimitrijevic-Bussod M."/>
            <person name="Escobar J."/>
            <person name="Fawcett J.J."/>
            <person name="Flowers D."/>
            <person name="Fotopulos D."/>
            <person name="Glavina T."/>
            <person name="Gomez M."/>
            <person name="Gonzales E."/>
            <person name="Goodstein D."/>
            <person name="Goodwin L.A."/>
            <person name="Grady D.L."/>
            <person name="Grigoriev I."/>
            <person name="Groza M."/>
            <person name="Hammon N."/>
            <person name="Hawkins T."/>
            <person name="Haydu L."/>
            <person name="Hildebrand C.E."/>
            <person name="Huang W."/>
            <person name="Israni S."/>
            <person name="Jett J."/>
            <person name="Jewett P.B."/>
            <person name="Kadner K."/>
            <person name="Kimball H."/>
            <person name="Kobayashi A."/>
            <person name="Krawczyk M.-C."/>
            <person name="Leyba T."/>
            <person name="Longmire J.L."/>
            <person name="Lopez F."/>
            <person name="Lou Y."/>
            <person name="Lowry S."/>
            <person name="Ludeman T."/>
            <person name="Manohar C.F."/>
            <person name="Mark G.A."/>
            <person name="McMurray K.L."/>
            <person name="Meincke L.J."/>
            <person name="Morgan J."/>
            <person name="Moyzis R.K."/>
            <person name="Mundt M.O."/>
            <person name="Munk A.C."/>
            <person name="Nandkeshwar R.D."/>
            <person name="Pitluck S."/>
            <person name="Pollard M."/>
            <person name="Predki P."/>
            <person name="Parson-Quintana B."/>
            <person name="Ramirez L."/>
            <person name="Rash S."/>
            <person name="Retterer J."/>
            <person name="Ricke D.O."/>
            <person name="Robinson D.L."/>
            <person name="Rodriguez A."/>
            <person name="Salamov A."/>
            <person name="Saunders E.H."/>
            <person name="Scott D."/>
            <person name="Shough T."/>
            <person name="Stallings R.L."/>
            <person name="Stalvey M."/>
            <person name="Sutherland R.D."/>
            <person name="Tapia R."/>
            <person name="Tesmer J.G."/>
            <person name="Thayer N."/>
            <person name="Thompson L.S."/>
            <person name="Tice H."/>
            <person name="Torney D.C."/>
            <person name="Tran-Gyamfi M."/>
            <person name="Tsai M."/>
            <person name="Ulanovsky L.E."/>
            <person name="Ustaszewska A."/>
            <person name="Vo N."/>
            <person name="White P.S."/>
            <person name="Williams A.L."/>
            <person name="Wills P.L."/>
            <person name="Wu J.-R."/>
            <person name="Wu K."/>
            <person name="Yang J."/>
            <person name="DeJong P."/>
            <person name="Bruce D."/>
            <person name="Doggett N.A."/>
            <person name="Deaven L."/>
            <person name="Schmutz J."/>
            <person name="Grimwood J."/>
            <person name="Richardson P."/>
            <person name="Rokhsar D.S."/>
            <person name="Eichler E.E."/>
            <person name="Gilna P."/>
            <person name="Lucas S.M."/>
            <person name="Myers R.M."/>
            <person name="Rubin E.M."/>
            <person name="Pennacchio L.A."/>
        </authorList>
    </citation>
    <scope>NUCLEOTIDE SEQUENCE [LARGE SCALE GENOMIC DNA]</scope>
</reference>
<reference key="3">
    <citation type="journal article" date="2004" name="Genome Res.">
        <title>The status, quality, and expansion of the NIH full-length cDNA project: the Mammalian Gene Collection (MGC).</title>
        <authorList>
            <consortium name="The MGC Project Team"/>
        </authorList>
    </citation>
    <scope>NUCLEOTIDE SEQUENCE [LARGE SCALE MRNA]</scope>
    <scope>VARIANT VAL-65</scope>
    <source>
        <tissue>Brain</tissue>
        <tissue>Skin</tissue>
    </source>
</reference>
<reference key="4">
    <citation type="journal article" date="1992" name="Genomics">
        <title>Clustering of C2-H2 zinc finger motif sequences within telomeric and fragile site regions of human chromosomes.</title>
        <authorList>
            <person name="Lichter P."/>
            <person name="Bray P."/>
            <person name="Ried T."/>
            <person name="Dawid I.B."/>
            <person name="Ward D.C."/>
        </authorList>
    </citation>
    <scope>NUCLEOTIDE SEQUENCE [GENOMIC DNA] OF 126-182</scope>
    <source>
        <tissue>Placenta</tissue>
    </source>
</reference>
<reference key="5">
    <citation type="journal article" date="2007" name="BMC Genomics">
        <title>The full-ORF clone resource of the German cDNA consortium.</title>
        <authorList>
            <person name="Bechtel S."/>
            <person name="Rosenfelder H."/>
            <person name="Duda A."/>
            <person name="Schmidt C.P."/>
            <person name="Ernst U."/>
            <person name="Wellenreuther R."/>
            <person name="Mehrle A."/>
            <person name="Schuster C."/>
            <person name="Bahr A."/>
            <person name="Bloecker H."/>
            <person name="Heubner D."/>
            <person name="Hoerlein A."/>
            <person name="Michel G."/>
            <person name="Wedler H."/>
            <person name="Koehrer K."/>
            <person name="Ottenwaelder B."/>
            <person name="Poustka A."/>
            <person name="Wiemann S."/>
            <person name="Schupp I."/>
        </authorList>
    </citation>
    <scope>NUCLEOTIDE SEQUENCE [LARGE SCALE MRNA] OF 315-618</scope>
    <scope>VARIANT VAL-65</scope>
    <source>
        <tissue>Melanoma</tissue>
    </source>
</reference>
<reference key="6">
    <citation type="journal article" date="2011" name="Sci. Signal.">
        <title>System-wide temporal characterization of the proteome and phosphoproteome of human embryonic stem cell differentiation.</title>
        <authorList>
            <person name="Rigbolt K.T."/>
            <person name="Prokhorova T.A."/>
            <person name="Akimov V."/>
            <person name="Henningsen J."/>
            <person name="Johansen P.T."/>
            <person name="Kratchmarova I."/>
            <person name="Kassem M."/>
            <person name="Mann M."/>
            <person name="Olsen J.V."/>
            <person name="Blagoev B."/>
        </authorList>
    </citation>
    <scope>IDENTIFICATION BY MASS SPECTROMETRY [LARGE SCALE ANALYSIS]</scope>
</reference>
<reference key="7">
    <citation type="journal article" date="2014" name="Nat. Struct. Mol. Biol.">
        <title>Uncovering global SUMOylation signaling networks in a site-specific manner.</title>
        <authorList>
            <person name="Hendriks I.A."/>
            <person name="D'Souza R.C."/>
            <person name="Yang B."/>
            <person name="Verlaan-de Vries M."/>
            <person name="Mann M."/>
            <person name="Vertegaal A.C."/>
        </authorList>
    </citation>
    <scope>SUMOYLATION [LARGE SCALE ANALYSIS] AT LYS-610</scope>
    <scope>IDENTIFICATION BY MASS SPECTROMETRY [LARGE SCALE ANALYSIS]</scope>
</reference>
<reference key="8">
    <citation type="journal article" date="2015" name="Cell Rep.">
        <title>SUMO-2 orchestrates chromatin modifiers in response to DNA damage.</title>
        <authorList>
            <person name="Hendriks I.A."/>
            <person name="Treffers L.W."/>
            <person name="Verlaan-de Vries M."/>
            <person name="Olsen J.V."/>
            <person name="Vertegaal A.C."/>
        </authorList>
    </citation>
    <scope>SUMOYLATION [LARGE SCALE ANALYSIS] AT LYS-610</scope>
    <scope>IDENTIFICATION BY MASS SPECTROMETRY [LARGE SCALE ANALYSIS]</scope>
</reference>
<reference key="9">
    <citation type="journal article" date="2015" name="Mol. Cell. Proteomics">
        <title>System-wide analysis of SUMOylation dynamics in response to replication stress reveals novel small ubiquitin-like modified target proteins and acceptor lysines relevant for genome stability.</title>
        <authorList>
            <person name="Xiao Z."/>
            <person name="Chang J.G."/>
            <person name="Hendriks I.A."/>
            <person name="Sigurdsson J.O."/>
            <person name="Olsen J.V."/>
            <person name="Vertegaal A.C."/>
        </authorList>
    </citation>
    <scope>SUMOYLATION [LARGE SCALE ANALYSIS] AT LYS-610</scope>
    <scope>IDENTIFICATION BY MASS SPECTROMETRY [LARGE SCALE ANALYSIS]</scope>
</reference>
<reference key="10">
    <citation type="journal article" date="2017" name="Nat. Struct. Mol. Biol.">
        <title>Site-specific mapping of the human SUMO proteome reveals co-modification with phosphorylation.</title>
        <authorList>
            <person name="Hendriks I.A."/>
            <person name="Lyon D."/>
            <person name="Young C."/>
            <person name="Jensen L.J."/>
            <person name="Vertegaal A.C."/>
            <person name="Nielsen M.L."/>
        </authorList>
    </citation>
    <scope>SUMOYLATION [LARGE SCALE ANALYSIS] AT LYS-87; LYS-179; LYS-269; LYS-329; LYS-477 AND LYS-610</scope>
    <scope>IDENTIFICATION BY MASS SPECTROMETRY [LARGE SCALE ANALYSIS]</scope>
</reference>
<accession>Q96MX3</accession>
<accession>Q15920</accession>
<accession>Q4G0R3</accession>
<accession>Q69YP3</accession>
<accession>Q96IL9</accession>
<evidence type="ECO:0000250" key="1">
    <source>
        <dbReference type="UniProtKB" id="Q3US17"/>
    </source>
</evidence>
<evidence type="ECO:0000255" key="2">
    <source>
        <dbReference type="PROSITE-ProRule" id="PRU00042"/>
    </source>
</evidence>
<evidence type="ECO:0000256" key="3">
    <source>
        <dbReference type="SAM" id="MobiDB-lite"/>
    </source>
</evidence>
<evidence type="ECO:0000269" key="4">
    <source>
    </source>
</evidence>
<evidence type="ECO:0000269" key="5">
    <source>
    </source>
</evidence>
<evidence type="ECO:0000269" key="6">
    <source>
    </source>
</evidence>
<evidence type="ECO:0000305" key="7"/>
<evidence type="ECO:0007744" key="8">
    <source>
    </source>
</evidence>
<evidence type="ECO:0007744" key="9">
    <source>
    </source>
</evidence>
<evidence type="ECO:0007744" key="10">
    <source>
    </source>
</evidence>
<evidence type="ECO:0007744" key="11">
    <source>
    </source>
</evidence>
<dbReference type="EMBL" id="AK056313">
    <property type="protein sequence ID" value="BAB71146.1"/>
    <property type="molecule type" value="mRNA"/>
</dbReference>
<dbReference type="EMBL" id="AC116348">
    <property type="status" value="NOT_ANNOTATED_CDS"/>
    <property type="molecule type" value="Genomic_DNA"/>
</dbReference>
<dbReference type="EMBL" id="BC007393">
    <property type="protein sequence ID" value="AAH07393.2"/>
    <property type="molecule type" value="mRNA"/>
</dbReference>
<dbReference type="EMBL" id="BC041388">
    <property type="protein sequence ID" value="AAH41388.1"/>
    <property type="molecule type" value="mRNA"/>
</dbReference>
<dbReference type="EMBL" id="M88358">
    <property type="protein sequence ID" value="AAA61316.1"/>
    <property type="status" value="ALT_FRAME"/>
    <property type="molecule type" value="Genomic_DNA"/>
</dbReference>
<dbReference type="EMBL" id="AL832433">
    <property type="protein sequence ID" value="CAH10657.1"/>
    <property type="molecule type" value="mRNA"/>
</dbReference>
<dbReference type="CCDS" id="CCDS10679.1"/>
<dbReference type="PIR" id="B43284">
    <property type="entry name" value="B43284"/>
</dbReference>
<dbReference type="RefSeq" id="NP_001201835.1">
    <property type="nucleotide sequence ID" value="NM_001214906.1"/>
</dbReference>
<dbReference type="RefSeq" id="NP_001201838.1">
    <property type="nucleotide sequence ID" value="NM_001214909.2"/>
</dbReference>
<dbReference type="RefSeq" id="NP_689865.2">
    <property type="nucleotide sequence ID" value="NM_152652.3"/>
</dbReference>
<dbReference type="SMR" id="Q96MX3"/>
<dbReference type="BioGRID" id="128257">
    <property type="interactions" value="157"/>
</dbReference>
<dbReference type="FunCoup" id="Q96MX3">
    <property type="interactions" value="461"/>
</dbReference>
<dbReference type="IntAct" id="Q96MX3">
    <property type="interactions" value="141"/>
</dbReference>
<dbReference type="MINT" id="Q96MX3"/>
<dbReference type="STRING" id="9606.ENSP00000324056"/>
<dbReference type="GlyGen" id="Q96MX3">
    <property type="glycosylation" value="1 site, 1 O-linked glycan (1 site)"/>
</dbReference>
<dbReference type="iPTMnet" id="Q96MX3"/>
<dbReference type="PhosphoSitePlus" id="Q96MX3"/>
<dbReference type="BioMuta" id="ZNF48"/>
<dbReference type="DMDM" id="296453060"/>
<dbReference type="jPOST" id="Q96MX3"/>
<dbReference type="MassIVE" id="Q96MX3"/>
<dbReference type="PaxDb" id="9606-ENSP00000480262"/>
<dbReference type="PeptideAtlas" id="Q96MX3"/>
<dbReference type="ProteomicsDB" id="77428"/>
<dbReference type="Pumba" id="Q96MX3"/>
<dbReference type="TopDownProteomics" id="Q96MX3"/>
<dbReference type="Antibodypedia" id="13692">
    <property type="antibodies" value="33 antibodies from 15 providers"/>
</dbReference>
<dbReference type="DNASU" id="197407"/>
<dbReference type="Ensembl" id="ENST00000320159.2">
    <property type="protein sequence ID" value="ENSP00000324056.2"/>
    <property type="gene ID" value="ENSG00000180035.13"/>
</dbReference>
<dbReference type="Ensembl" id="ENST00000613509.2">
    <property type="protein sequence ID" value="ENSP00000480262.1"/>
    <property type="gene ID" value="ENSG00000180035.13"/>
</dbReference>
<dbReference type="GeneID" id="197407"/>
<dbReference type="KEGG" id="hsa:197407"/>
<dbReference type="MANE-Select" id="ENST00000613509.2">
    <property type="protein sequence ID" value="ENSP00000480262.1"/>
    <property type="RefSeq nucleotide sequence ID" value="NM_001214909.2"/>
    <property type="RefSeq protein sequence ID" value="NP_001201838.1"/>
</dbReference>
<dbReference type="UCSC" id="uc002dya.2">
    <property type="organism name" value="human"/>
</dbReference>
<dbReference type="AGR" id="HGNC:13114"/>
<dbReference type="CTD" id="197407"/>
<dbReference type="DisGeNET" id="197407"/>
<dbReference type="GeneCards" id="ZNF48"/>
<dbReference type="HGNC" id="HGNC:13114">
    <property type="gene designation" value="ZNF48"/>
</dbReference>
<dbReference type="HPA" id="ENSG00000180035">
    <property type="expression patterns" value="Low tissue specificity"/>
</dbReference>
<dbReference type="MalaCards" id="ZNF48"/>
<dbReference type="neXtProt" id="NX_Q96MX3"/>
<dbReference type="OpenTargets" id="ENSG00000180035"/>
<dbReference type="PharmGKB" id="PA37689"/>
<dbReference type="VEuPathDB" id="HostDB:ENSG00000180035"/>
<dbReference type="eggNOG" id="KOG1721">
    <property type="taxonomic scope" value="Eukaryota"/>
</dbReference>
<dbReference type="GeneTree" id="ENSGT00940000162332"/>
<dbReference type="InParanoid" id="Q96MX3"/>
<dbReference type="OMA" id="MEPQDFG"/>
<dbReference type="OrthoDB" id="3437960at2759"/>
<dbReference type="PAN-GO" id="Q96MX3">
    <property type="GO annotations" value="4 GO annotations based on evolutionary models"/>
</dbReference>
<dbReference type="PhylomeDB" id="Q96MX3"/>
<dbReference type="TreeFam" id="TF338489"/>
<dbReference type="PathwayCommons" id="Q96MX3"/>
<dbReference type="SignaLink" id="Q96MX3"/>
<dbReference type="BioGRID-ORCS" id="197407">
    <property type="hits" value="21 hits in 1177 CRISPR screens"/>
</dbReference>
<dbReference type="ChiTaRS" id="ZNF48">
    <property type="organism name" value="human"/>
</dbReference>
<dbReference type="GenomeRNAi" id="197407"/>
<dbReference type="Pharos" id="Q96MX3">
    <property type="development level" value="Tdark"/>
</dbReference>
<dbReference type="PRO" id="PR:Q96MX3"/>
<dbReference type="Proteomes" id="UP000005640">
    <property type="component" value="Chromosome 16"/>
</dbReference>
<dbReference type="RNAct" id="Q96MX3">
    <property type="molecule type" value="protein"/>
</dbReference>
<dbReference type="Bgee" id="ENSG00000180035">
    <property type="expression patterns" value="Expressed in cortical plate and 164 other cell types or tissues"/>
</dbReference>
<dbReference type="ExpressionAtlas" id="Q96MX3">
    <property type="expression patterns" value="baseline and differential"/>
</dbReference>
<dbReference type="GO" id="GO:0005634">
    <property type="term" value="C:nucleus"/>
    <property type="evidence" value="ECO:0000318"/>
    <property type="project" value="GO_Central"/>
</dbReference>
<dbReference type="GO" id="GO:0003677">
    <property type="term" value="F:DNA binding"/>
    <property type="evidence" value="ECO:0007669"/>
    <property type="project" value="UniProtKB-KW"/>
</dbReference>
<dbReference type="GO" id="GO:0042802">
    <property type="term" value="F:identical protein binding"/>
    <property type="evidence" value="ECO:0000353"/>
    <property type="project" value="IntAct"/>
</dbReference>
<dbReference type="GO" id="GO:0008270">
    <property type="term" value="F:zinc ion binding"/>
    <property type="evidence" value="ECO:0007669"/>
    <property type="project" value="UniProtKB-KW"/>
</dbReference>
<dbReference type="GO" id="GO:0006357">
    <property type="term" value="P:regulation of transcription by RNA polymerase II"/>
    <property type="evidence" value="ECO:0000318"/>
    <property type="project" value="GO_Central"/>
</dbReference>
<dbReference type="FunFam" id="3.30.160.60:FF:000823">
    <property type="entry name" value="replication initiator 1 isoform X1"/>
    <property type="match status" value="1"/>
</dbReference>
<dbReference type="FunFam" id="3.30.160.60:FF:000277">
    <property type="entry name" value="Zinc finger protein 48"/>
    <property type="match status" value="5"/>
</dbReference>
<dbReference type="FunFam" id="3.30.160.60:FF:000950">
    <property type="entry name" value="Zinc finger protein 48"/>
    <property type="match status" value="1"/>
</dbReference>
<dbReference type="FunFam" id="3.30.160.60:FF:001305">
    <property type="entry name" value="Zinc finger protein 48"/>
    <property type="match status" value="1"/>
</dbReference>
<dbReference type="FunFam" id="3.30.160.60:FF:000418">
    <property type="entry name" value="zinc finger protein 48"/>
    <property type="match status" value="3"/>
</dbReference>
<dbReference type="FunFam" id="3.30.160.60:FF:001245">
    <property type="entry name" value="zinc finger protein 48"/>
    <property type="match status" value="1"/>
</dbReference>
<dbReference type="Gene3D" id="3.30.160.60">
    <property type="entry name" value="Classic Zinc Finger"/>
    <property type="match status" value="12"/>
</dbReference>
<dbReference type="InterPro" id="IPR036236">
    <property type="entry name" value="Znf_C2H2_sf"/>
</dbReference>
<dbReference type="InterPro" id="IPR013087">
    <property type="entry name" value="Znf_C2H2_type"/>
</dbReference>
<dbReference type="PANTHER" id="PTHR24393:SF34">
    <property type="entry name" value="PR_SET DOMAIN 13"/>
    <property type="match status" value="1"/>
</dbReference>
<dbReference type="PANTHER" id="PTHR24393">
    <property type="entry name" value="ZINC FINGER PROTEIN"/>
    <property type="match status" value="1"/>
</dbReference>
<dbReference type="Pfam" id="PF00096">
    <property type="entry name" value="zf-C2H2"/>
    <property type="match status" value="12"/>
</dbReference>
<dbReference type="SMART" id="SM00355">
    <property type="entry name" value="ZnF_C2H2"/>
    <property type="match status" value="12"/>
</dbReference>
<dbReference type="SUPFAM" id="SSF57667">
    <property type="entry name" value="beta-beta-alpha zinc fingers"/>
    <property type="match status" value="6"/>
</dbReference>
<dbReference type="PROSITE" id="PS00028">
    <property type="entry name" value="ZINC_FINGER_C2H2_1"/>
    <property type="match status" value="12"/>
</dbReference>
<dbReference type="PROSITE" id="PS50157">
    <property type="entry name" value="ZINC_FINGER_C2H2_2"/>
    <property type="match status" value="12"/>
</dbReference>
<sequence length="618" mass="67820">MERAVEPWGPDLHRPEEREPQRGARTGLGSENVISQPNEFEHTPQEDDLGFKEEDLAPDHEVGNASLKPEGIQNWDDLWVQREGLGKPQPRDRGPRLLGEPRWGQASSDRAAVCGECGKSFRQMSDLVKHQRTHTGEKPYKCGVCGKGFGDSSARIKHQRTHSGEKPYRARPPAQGPPKIPRSRIPAGERPTICGECGKSFRQSSDLVKHQRTHTGEKPYKCGICGKGFGDSSARIKHQRTHRGEQPPRPVVPRRQPSRAATAATQGPKAQDKPYICTDCGKRFVLSCSLLSHQRSHLGPKPFGCDVCGKEFARGSDLVKHLRVHTGEKPYLCPECGKGFADSSARVKHLRTHSGERPHACPECDRTFSLSSTLLRHRLTHMEPQDFSFPGYPLPALIPSPPPPPLGTSPPLTPRSPSHSGEPFGLPGLEPEPGGPQAGEPPPPLAGDKPHKCPECGKGFRRSSDLVKHHRVHTGEKPYLCPECGKGFADSSARVKHLRTHRGERARPPPPSTLLRPHNPPGPVPMAPRPRVRAQPSGPSQPHVCGFCGKEFPRSSDLVKHRRTHTGEKPYKCAECGKGFGDSSARIKHQRGHLVLTPFGIGDGRARPLKQEAATGLE</sequence>
<name>ZNF48_HUMAN</name>
<keyword id="KW-0007">Acetylation</keyword>
<keyword id="KW-0238">DNA-binding</keyword>
<keyword id="KW-1017">Isopeptide bond</keyword>
<keyword id="KW-0479">Metal-binding</keyword>
<keyword id="KW-0539">Nucleus</keyword>
<keyword id="KW-1267">Proteomics identification</keyword>
<keyword id="KW-1185">Reference proteome</keyword>
<keyword id="KW-0677">Repeat</keyword>
<keyword id="KW-0804">Transcription</keyword>
<keyword id="KW-0805">Transcription regulation</keyword>
<keyword id="KW-0832">Ubl conjugation</keyword>
<keyword id="KW-0862">Zinc</keyword>
<keyword id="KW-0863">Zinc-finger</keyword>